<reference key="1">
    <citation type="journal article" date="2005" name="Nucleic Acids Res.">
        <title>Genome dynamics and diversity of Shigella species, the etiologic agents of bacillary dysentery.</title>
        <authorList>
            <person name="Yang F."/>
            <person name="Yang J."/>
            <person name="Zhang X."/>
            <person name="Chen L."/>
            <person name="Jiang Y."/>
            <person name="Yan Y."/>
            <person name="Tang X."/>
            <person name="Wang J."/>
            <person name="Xiong Z."/>
            <person name="Dong J."/>
            <person name="Xue Y."/>
            <person name="Zhu Y."/>
            <person name="Xu X."/>
            <person name="Sun L."/>
            <person name="Chen S."/>
            <person name="Nie H."/>
            <person name="Peng J."/>
            <person name="Xu J."/>
            <person name="Wang Y."/>
            <person name="Yuan Z."/>
            <person name="Wen Y."/>
            <person name="Yao Z."/>
            <person name="Shen Y."/>
            <person name="Qiang B."/>
            <person name="Hou Y."/>
            <person name="Yu J."/>
            <person name="Jin Q."/>
        </authorList>
    </citation>
    <scope>NUCLEOTIDE SEQUENCE [LARGE SCALE GENOMIC DNA]</scope>
    <source>
        <strain>Ss046</strain>
    </source>
</reference>
<protein>
    <recommendedName>
        <fullName evidence="2">N(4)-acetylcytidine amidohydrolase</fullName>
        <shortName evidence="2">ac4C amidohydrolase</shortName>
        <ecNumber evidence="2">3.5.1.135</ecNumber>
    </recommendedName>
</protein>
<evidence type="ECO:0000255" key="1"/>
<evidence type="ECO:0000255" key="2">
    <source>
        <dbReference type="HAMAP-Rule" id="MF_00684"/>
    </source>
</evidence>
<proteinExistence type="inferred from homology"/>
<accession>Q3YXX0</accession>
<gene>
    <name type="primary">yqfB</name>
    <name type="ordered locus">SSON_3053</name>
</gene>
<sequence length="103" mass="11890">MQPNDITFFQRFQDDILAGRKTITIRDESESHFKTGDVLRVGRFEDDGYFCTIEVTATSTVTLDTLTEKHAEQENMTLTELIKVIADIYPGQTQFYVIEFKCL</sequence>
<comment type="function">
    <text evidence="2">Catalyzes the hydrolysis of N(4)-acetylcytidine (ac4C).</text>
</comment>
<comment type="catalytic activity">
    <reaction evidence="2">
        <text>N(4)-acetylcytidine + H2O = cytidine + acetate + H(+)</text>
        <dbReference type="Rhea" id="RHEA:62932"/>
        <dbReference type="ChEBI" id="CHEBI:15377"/>
        <dbReference type="ChEBI" id="CHEBI:15378"/>
        <dbReference type="ChEBI" id="CHEBI:17562"/>
        <dbReference type="ChEBI" id="CHEBI:30089"/>
        <dbReference type="ChEBI" id="CHEBI:70989"/>
        <dbReference type="EC" id="3.5.1.135"/>
    </reaction>
</comment>
<comment type="catalytic activity">
    <reaction evidence="2">
        <text>N(4)-acetyl-2'-deoxycytidine + H2O = 2'-deoxycytidine + acetate + H(+)</text>
        <dbReference type="Rhea" id="RHEA:62936"/>
        <dbReference type="ChEBI" id="CHEBI:15377"/>
        <dbReference type="ChEBI" id="CHEBI:15378"/>
        <dbReference type="ChEBI" id="CHEBI:15698"/>
        <dbReference type="ChEBI" id="CHEBI:30089"/>
        <dbReference type="ChEBI" id="CHEBI:146133"/>
        <dbReference type="EC" id="3.5.1.135"/>
    </reaction>
</comment>
<comment type="catalytic activity">
    <reaction evidence="2">
        <text>N(4)-acetylcytosine + H2O = cytosine + acetate + H(+)</text>
        <dbReference type="Rhea" id="RHEA:62940"/>
        <dbReference type="ChEBI" id="CHEBI:15377"/>
        <dbReference type="ChEBI" id="CHEBI:15378"/>
        <dbReference type="ChEBI" id="CHEBI:16040"/>
        <dbReference type="ChEBI" id="CHEBI:30089"/>
        <dbReference type="ChEBI" id="CHEBI:146134"/>
        <dbReference type="EC" id="3.5.1.135"/>
    </reaction>
</comment>
<comment type="similarity">
    <text evidence="2">Belongs to the N(4)-acetylcytidine amidohydrolase family.</text>
</comment>
<organism>
    <name type="scientific">Shigella sonnei (strain Ss046)</name>
    <dbReference type="NCBI Taxonomy" id="300269"/>
    <lineage>
        <taxon>Bacteria</taxon>
        <taxon>Pseudomonadati</taxon>
        <taxon>Pseudomonadota</taxon>
        <taxon>Gammaproteobacteria</taxon>
        <taxon>Enterobacterales</taxon>
        <taxon>Enterobacteriaceae</taxon>
        <taxon>Shigella</taxon>
    </lineage>
</organism>
<dbReference type="EC" id="3.5.1.135" evidence="2"/>
<dbReference type="EMBL" id="CP000038">
    <property type="protein sequence ID" value="AAZ89642.1"/>
    <property type="molecule type" value="Genomic_DNA"/>
</dbReference>
<dbReference type="RefSeq" id="WP_001182954.1">
    <property type="nucleotide sequence ID" value="NC_007384.1"/>
</dbReference>
<dbReference type="SMR" id="Q3YXX0"/>
<dbReference type="GeneID" id="93779102"/>
<dbReference type="KEGG" id="ssn:SSON_3053"/>
<dbReference type="HOGENOM" id="CLU_152586_0_0_6"/>
<dbReference type="Proteomes" id="UP000002529">
    <property type="component" value="Chromosome"/>
</dbReference>
<dbReference type="GO" id="GO:0005829">
    <property type="term" value="C:cytosol"/>
    <property type="evidence" value="ECO:0007669"/>
    <property type="project" value="TreeGrafter"/>
</dbReference>
<dbReference type="GO" id="GO:0016813">
    <property type="term" value="F:hydrolase activity, acting on carbon-nitrogen (but not peptide) bonds, in linear amidines"/>
    <property type="evidence" value="ECO:0007669"/>
    <property type="project" value="UniProtKB-UniRule"/>
</dbReference>
<dbReference type="GO" id="GO:0106251">
    <property type="term" value="F:N4-acetylcytidine amidohydrolase activity"/>
    <property type="evidence" value="ECO:0007669"/>
    <property type="project" value="RHEA"/>
</dbReference>
<dbReference type="CDD" id="cd06552">
    <property type="entry name" value="ASCH_yqfb_like"/>
    <property type="match status" value="1"/>
</dbReference>
<dbReference type="FunFam" id="2.30.130.30:FF:000001">
    <property type="entry name" value="UPF0267 protein YqfB"/>
    <property type="match status" value="1"/>
</dbReference>
<dbReference type="Gene3D" id="2.30.130.30">
    <property type="entry name" value="Hypothetical protein"/>
    <property type="match status" value="1"/>
</dbReference>
<dbReference type="HAMAP" id="MF_00684">
    <property type="entry name" value="ac4C_amidohydr"/>
    <property type="match status" value="1"/>
</dbReference>
<dbReference type="InterPro" id="IPR008314">
    <property type="entry name" value="AC4CH"/>
</dbReference>
<dbReference type="InterPro" id="IPR007374">
    <property type="entry name" value="ASCH_domain"/>
</dbReference>
<dbReference type="InterPro" id="IPR015947">
    <property type="entry name" value="PUA-like_sf"/>
</dbReference>
<dbReference type="NCBIfam" id="NF003443">
    <property type="entry name" value="PRK04980.1"/>
    <property type="match status" value="1"/>
</dbReference>
<dbReference type="PANTHER" id="PTHR38088">
    <property type="entry name" value="UCP029143 FAMILY PROTEIN"/>
    <property type="match status" value="1"/>
</dbReference>
<dbReference type="PANTHER" id="PTHR38088:SF2">
    <property type="entry name" value="UCP029143 FAMILY PROTEIN"/>
    <property type="match status" value="1"/>
</dbReference>
<dbReference type="Pfam" id="PF04266">
    <property type="entry name" value="ASCH"/>
    <property type="match status" value="1"/>
</dbReference>
<dbReference type="PIRSF" id="PIRSF029143">
    <property type="entry name" value="UCP029143"/>
    <property type="match status" value="1"/>
</dbReference>
<dbReference type="SMART" id="SM01022">
    <property type="entry name" value="ASCH"/>
    <property type="match status" value="1"/>
</dbReference>
<dbReference type="SUPFAM" id="SSF88697">
    <property type="entry name" value="PUA domain-like"/>
    <property type="match status" value="1"/>
</dbReference>
<keyword id="KW-0378">Hydrolase</keyword>
<keyword id="KW-1185">Reference proteome</keyword>
<feature type="chain" id="PRO_1000044962" description="N(4)-acetylcytidine amidohydrolase">
    <location>
        <begin position="1"/>
        <end position="103"/>
    </location>
</feature>
<feature type="domain" description="ASCH" evidence="1">
    <location>
        <begin position="6"/>
        <end position="101"/>
    </location>
</feature>
<feature type="active site" description="Proton acceptor" evidence="2">
    <location>
        <position position="21"/>
    </location>
</feature>
<feature type="active site" description="Nucleophile" evidence="2">
    <location>
        <position position="24"/>
    </location>
</feature>
<feature type="active site" description="Proton donor" evidence="2">
    <location>
        <position position="74"/>
    </location>
</feature>
<name>AC4CH_SHISS</name>